<keyword id="KW-0963">Cytoplasm</keyword>
<keyword id="KW-0275">Fatty acid biosynthesis</keyword>
<keyword id="KW-0276">Fatty acid metabolism</keyword>
<keyword id="KW-0413">Isomerase</keyword>
<keyword id="KW-0444">Lipid biosynthesis</keyword>
<keyword id="KW-0443">Lipid metabolism</keyword>
<keyword id="KW-0456">Lyase</keyword>
<dbReference type="EC" id="4.2.1.59" evidence="1"/>
<dbReference type="EC" id="5.3.3.14" evidence="1"/>
<dbReference type="EMBL" id="CP000901">
    <property type="protein sequence ID" value="ABX87138.1"/>
    <property type="molecule type" value="Genomic_DNA"/>
</dbReference>
<dbReference type="RefSeq" id="WP_002220006.1">
    <property type="nucleotide sequence ID" value="NZ_CP009935.1"/>
</dbReference>
<dbReference type="SMR" id="A9R7H1"/>
<dbReference type="GeneID" id="57977132"/>
<dbReference type="KEGG" id="ypg:YpAngola_A1942"/>
<dbReference type="PATRIC" id="fig|349746.12.peg.2918"/>
<dbReference type="UniPathway" id="UPA00094"/>
<dbReference type="GO" id="GO:0005737">
    <property type="term" value="C:cytoplasm"/>
    <property type="evidence" value="ECO:0007669"/>
    <property type="project" value="UniProtKB-SubCell"/>
</dbReference>
<dbReference type="GO" id="GO:0019171">
    <property type="term" value="F:(3R)-hydroxyacyl-[acyl-carrier-protein] dehydratase activity"/>
    <property type="evidence" value="ECO:0007669"/>
    <property type="project" value="UniProtKB-UniRule"/>
</dbReference>
<dbReference type="GO" id="GO:0034017">
    <property type="term" value="F:trans-2-decenoyl-acyl-carrier-protein isomerase activity"/>
    <property type="evidence" value="ECO:0007669"/>
    <property type="project" value="UniProtKB-UniRule"/>
</dbReference>
<dbReference type="GO" id="GO:0006636">
    <property type="term" value="P:unsaturated fatty acid biosynthetic process"/>
    <property type="evidence" value="ECO:0007669"/>
    <property type="project" value="UniProtKB-UniRule"/>
</dbReference>
<dbReference type="CDD" id="cd01287">
    <property type="entry name" value="FabA"/>
    <property type="match status" value="1"/>
</dbReference>
<dbReference type="FunFam" id="3.10.129.10:FF:000003">
    <property type="entry name" value="3-hydroxydecanoyl-[acyl-carrier-protein] dehydratase"/>
    <property type="match status" value="1"/>
</dbReference>
<dbReference type="Gene3D" id="3.10.129.10">
    <property type="entry name" value="Hotdog Thioesterase"/>
    <property type="match status" value="1"/>
</dbReference>
<dbReference type="HAMAP" id="MF_00405">
    <property type="entry name" value="FabA"/>
    <property type="match status" value="1"/>
</dbReference>
<dbReference type="InterPro" id="IPR010083">
    <property type="entry name" value="FabA"/>
</dbReference>
<dbReference type="InterPro" id="IPR013114">
    <property type="entry name" value="FabA_FabZ"/>
</dbReference>
<dbReference type="InterPro" id="IPR029069">
    <property type="entry name" value="HotDog_dom_sf"/>
</dbReference>
<dbReference type="NCBIfam" id="TIGR01749">
    <property type="entry name" value="fabA"/>
    <property type="match status" value="1"/>
</dbReference>
<dbReference type="NCBIfam" id="NF003509">
    <property type="entry name" value="PRK05174.1"/>
    <property type="match status" value="1"/>
</dbReference>
<dbReference type="PANTHER" id="PTHR30272">
    <property type="entry name" value="3-HYDROXYACYL-[ACYL-CARRIER-PROTEIN] DEHYDRATASE"/>
    <property type="match status" value="1"/>
</dbReference>
<dbReference type="PANTHER" id="PTHR30272:SF8">
    <property type="entry name" value="3-HYDROXYDECANOYL-[ACYL-CARRIER-PROTEIN] DEHYDRATASE"/>
    <property type="match status" value="1"/>
</dbReference>
<dbReference type="Pfam" id="PF07977">
    <property type="entry name" value="FabA"/>
    <property type="match status" value="1"/>
</dbReference>
<dbReference type="SUPFAM" id="SSF54637">
    <property type="entry name" value="Thioesterase/thiol ester dehydrase-isomerase"/>
    <property type="match status" value="1"/>
</dbReference>
<proteinExistence type="inferred from homology"/>
<reference key="1">
    <citation type="journal article" date="2010" name="J. Bacteriol.">
        <title>Genome sequence of the deep-rooted Yersinia pestis strain Angola reveals new insights into the evolution and pangenome of the plague bacterium.</title>
        <authorList>
            <person name="Eppinger M."/>
            <person name="Worsham P.L."/>
            <person name="Nikolich M.P."/>
            <person name="Riley D.R."/>
            <person name="Sebastian Y."/>
            <person name="Mou S."/>
            <person name="Achtman M."/>
            <person name="Lindler L.E."/>
            <person name="Ravel J."/>
        </authorList>
    </citation>
    <scope>NUCLEOTIDE SEQUENCE [LARGE SCALE GENOMIC DNA]</scope>
    <source>
        <strain>Angola</strain>
    </source>
</reference>
<comment type="function">
    <text evidence="1">Necessary for the introduction of cis unsaturation into fatty acids. Catalyzes the dehydration of (3R)-3-hydroxydecanoyl-ACP to E-(2)-decenoyl-ACP and then its isomerization to Z-(3)-decenoyl-ACP. Can catalyze the dehydratase reaction for beta-hydroxyacyl-ACPs with saturated chain lengths up to 16:0, being most active on intermediate chain length.</text>
</comment>
<comment type="catalytic activity">
    <reaction evidence="1">
        <text>a (3R)-hydroxyacyl-[ACP] = a (2E)-enoyl-[ACP] + H2O</text>
        <dbReference type="Rhea" id="RHEA:13097"/>
        <dbReference type="Rhea" id="RHEA-COMP:9925"/>
        <dbReference type="Rhea" id="RHEA-COMP:9945"/>
        <dbReference type="ChEBI" id="CHEBI:15377"/>
        <dbReference type="ChEBI" id="CHEBI:78784"/>
        <dbReference type="ChEBI" id="CHEBI:78827"/>
        <dbReference type="EC" id="4.2.1.59"/>
    </reaction>
</comment>
<comment type="catalytic activity">
    <reaction evidence="1">
        <text>(3R)-hydroxydecanoyl-[ACP] = (2E)-decenoyl-[ACP] + H2O</text>
        <dbReference type="Rhea" id="RHEA:41860"/>
        <dbReference type="Rhea" id="RHEA-COMP:9638"/>
        <dbReference type="Rhea" id="RHEA-COMP:9639"/>
        <dbReference type="ChEBI" id="CHEBI:15377"/>
        <dbReference type="ChEBI" id="CHEBI:78466"/>
        <dbReference type="ChEBI" id="CHEBI:78467"/>
    </reaction>
</comment>
<comment type="catalytic activity">
    <reaction evidence="1">
        <text>(2E)-decenoyl-[ACP] = (3Z)-decenoyl-[ACP]</text>
        <dbReference type="Rhea" id="RHEA:23568"/>
        <dbReference type="Rhea" id="RHEA-COMP:9639"/>
        <dbReference type="Rhea" id="RHEA-COMP:9927"/>
        <dbReference type="ChEBI" id="CHEBI:78467"/>
        <dbReference type="ChEBI" id="CHEBI:78798"/>
        <dbReference type="EC" id="5.3.3.14"/>
    </reaction>
</comment>
<comment type="pathway">
    <text evidence="1">Lipid metabolism; fatty acid biosynthesis.</text>
</comment>
<comment type="subunit">
    <text evidence="1">Homodimer.</text>
</comment>
<comment type="subcellular location">
    <subcellularLocation>
        <location evidence="1">Cytoplasm</location>
    </subcellularLocation>
</comment>
<comment type="similarity">
    <text evidence="1">Belongs to the thioester dehydratase family. FabA subfamily.</text>
</comment>
<accession>A9R7H1</accession>
<protein>
    <recommendedName>
        <fullName evidence="1">3-hydroxydecanoyl-[acyl-carrier-protein] dehydratase</fullName>
        <ecNumber evidence="1">4.2.1.59</ecNumber>
    </recommendedName>
    <alternativeName>
        <fullName evidence="1">3-hydroxyacyl-[acyl-carrier-protein] dehydratase FabA</fullName>
    </alternativeName>
    <alternativeName>
        <fullName evidence="1">Beta-hydroxydecanoyl thioester dehydrase</fullName>
    </alternativeName>
    <alternativeName>
        <fullName evidence="1">Trans-2-decenoyl-[acyl-carrier-protein] isomerase</fullName>
        <ecNumber evidence="1">5.3.3.14</ecNumber>
    </alternativeName>
</protein>
<organism>
    <name type="scientific">Yersinia pestis bv. Antiqua (strain Angola)</name>
    <dbReference type="NCBI Taxonomy" id="349746"/>
    <lineage>
        <taxon>Bacteria</taxon>
        <taxon>Pseudomonadati</taxon>
        <taxon>Pseudomonadota</taxon>
        <taxon>Gammaproteobacteria</taxon>
        <taxon>Enterobacterales</taxon>
        <taxon>Yersiniaceae</taxon>
        <taxon>Yersinia</taxon>
    </lineage>
</organism>
<name>FABA_YERPG</name>
<gene>
    <name evidence="1" type="primary">fabA</name>
    <name type="ordered locus">YpAngola_A1942</name>
</gene>
<sequence length="172" mass="18810">MVDKRESYTKEDLEASGRGELFGAGGPPLPAGNMLMMDRIVKMIEDGGSHNKGYVEAELDINPDLWFFGCHFIGDPVMPGCLGLDAMWQLVGFYLGWLGGEGKGRALGVGEVKFTGQVLPDAKKVTYRINFKRVIMRKLIMGVADGEVLVDGKVIYTATDLKVGLFKDTNAF</sequence>
<feature type="chain" id="PRO_1000201230" description="3-hydroxydecanoyl-[acyl-carrier-protein] dehydratase">
    <location>
        <begin position="1"/>
        <end position="172"/>
    </location>
</feature>
<feature type="active site" evidence="1">
    <location>
        <position position="71"/>
    </location>
</feature>
<evidence type="ECO:0000255" key="1">
    <source>
        <dbReference type="HAMAP-Rule" id="MF_00405"/>
    </source>
</evidence>